<accession>Q1JDG4</accession>
<protein>
    <recommendedName>
        <fullName evidence="1">Serine/threonine transporter SstT</fullName>
    </recommendedName>
    <alternativeName>
        <fullName evidence="1">Na(+)/serine-threonine symporter</fullName>
    </alternativeName>
</protein>
<dbReference type="EMBL" id="CP000261">
    <property type="protein sequence ID" value="ABF35344.1"/>
    <property type="molecule type" value="Genomic_DNA"/>
</dbReference>
<dbReference type="SMR" id="Q1JDG4"/>
<dbReference type="KEGG" id="spj:MGAS2096_Spy0292"/>
<dbReference type="HOGENOM" id="CLU_044581_0_0_9"/>
<dbReference type="GO" id="GO:0005886">
    <property type="term" value="C:plasma membrane"/>
    <property type="evidence" value="ECO:0007669"/>
    <property type="project" value="UniProtKB-SubCell"/>
</dbReference>
<dbReference type="GO" id="GO:0015171">
    <property type="term" value="F:amino acid transmembrane transporter activity"/>
    <property type="evidence" value="ECO:0007669"/>
    <property type="project" value="UniProtKB-UniRule"/>
</dbReference>
<dbReference type="GO" id="GO:0015293">
    <property type="term" value="F:symporter activity"/>
    <property type="evidence" value="ECO:0007669"/>
    <property type="project" value="UniProtKB-UniRule"/>
</dbReference>
<dbReference type="GO" id="GO:0032329">
    <property type="term" value="P:serine transport"/>
    <property type="evidence" value="ECO:0007669"/>
    <property type="project" value="InterPro"/>
</dbReference>
<dbReference type="GO" id="GO:0015826">
    <property type="term" value="P:threonine transport"/>
    <property type="evidence" value="ECO:0007669"/>
    <property type="project" value="InterPro"/>
</dbReference>
<dbReference type="FunFam" id="1.10.3860.10:FF:000003">
    <property type="entry name" value="Serine/threonine transporter sstT"/>
    <property type="match status" value="1"/>
</dbReference>
<dbReference type="Gene3D" id="1.10.3860.10">
    <property type="entry name" value="Sodium:dicarboxylate symporter"/>
    <property type="match status" value="1"/>
</dbReference>
<dbReference type="HAMAP" id="MF_01582">
    <property type="entry name" value="Ser_Thr_transp_SstT"/>
    <property type="match status" value="1"/>
</dbReference>
<dbReference type="InterPro" id="IPR001991">
    <property type="entry name" value="Na-dicarboxylate_symporter"/>
</dbReference>
<dbReference type="InterPro" id="IPR036458">
    <property type="entry name" value="Na:dicarbo_symporter_sf"/>
</dbReference>
<dbReference type="InterPro" id="IPR023025">
    <property type="entry name" value="Ser_Thr_transp_SstT"/>
</dbReference>
<dbReference type="NCBIfam" id="NF010151">
    <property type="entry name" value="PRK13628.1"/>
    <property type="match status" value="1"/>
</dbReference>
<dbReference type="PANTHER" id="PTHR42865">
    <property type="entry name" value="PROTON/GLUTAMATE-ASPARTATE SYMPORTER"/>
    <property type="match status" value="1"/>
</dbReference>
<dbReference type="PANTHER" id="PTHR42865:SF7">
    <property type="entry name" value="PROTON_GLUTAMATE-ASPARTATE SYMPORTER"/>
    <property type="match status" value="1"/>
</dbReference>
<dbReference type="Pfam" id="PF00375">
    <property type="entry name" value="SDF"/>
    <property type="match status" value="1"/>
</dbReference>
<dbReference type="PRINTS" id="PR00173">
    <property type="entry name" value="EDTRNSPORT"/>
</dbReference>
<dbReference type="SUPFAM" id="SSF118215">
    <property type="entry name" value="Proton glutamate symport protein"/>
    <property type="match status" value="1"/>
</dbReference>
<keyword id="KW-0029">Amino-acid transport</keyword>
<keyword id="KW-1003">Cell membrane</keyword>
<keyword id="KW-0472">Membrane</keyword>
<keyword id="KW-0769">Symport</keyword>
<keyword id="KW-0812">Transmembrane</keyword>
<keyword id="KW-1133">Transmembrane helix</keyword>
<keyword id="KW-0813">Transport</keyword>
<sequence>MKKIYDLWVRVSLIKKIGIGVVIGVMLGILAPDLTGFSILGKLFVGGLKAIAPLLVFALVSQAISHQKKGKQTNMTLIIVLYLFGTFASALVAVLTAYLFPLTLVLNTPVNTELSPPQGVAEVFQSLLLKLVDNPINALATANYIGVLSWAIIFGLALKAASQETKHLIKTAAEVTSQIVVWIINLAPIGIMSLVFTTISENGVGILSDYAFLILVLVGTMVFVALVVNPLIAVLITRQNPYPLVLRCLRESGLTAFFTRSSAANIPVNMQLCQKIGLSKDTYSVSIPLGATINMGGAAITINVLTLAAVHTFGIPIDFLTALLLSVVAAVSACGASGVAGGSLLLIPVACSLFGISNDLAMQVVGVGFIVGVIQDSCETALNSSTDVLFTAIAENAFWKRKKA</sequence>
<feature type="chain" id="PRO_0000309138" description="Serine/threonine transporter SstT">
    <location>
        <begin position="1"/>
        <end position="404"/>
    </location>
</feature>
<feature type="transmembrane region" description="Helical" evidence="1">
    <location>
        <begin position="17"/>
        <end position="37"/>
    </location>
</feature>
<feature type="transmembrane region" description="Helical" evidence="1">
    <location>
        <begin position="39"/>
        <end position="59"/>
    </location>
</feature>
<feature type="transmembrane region" description="Helical" evidence="1">
    <location>
        <begin position="75"/>
        <end position="95"/>
    </location>
</feature>
<feature type="transmembrane region" description="Helical" evidence="1">
    <location>
        <begin position="138"/>
        <end position="158"/>
    </location>
</feature>
<feature type="transmembrane region" description="Helical" evidence="1">
    <location>
        <begin position="179"/>
        <end position="199"/>
    </location>
</feature>
<feature type="transmembrane region" description="Helical" evidence="1">
    <location>
        <begin position="212"/>
        <end position="232"/>
    </location>
</feature>
<feature type="transmembrane region" description="Helical" evidence="1">
    <location>
        <begin position="287"/>
        <end position="307"/>
    </location>
</feature>
<feature type="transmembrane region" description="Helical" evidence="1">
    <location>
        <begin position="313"/>
        <end position="333"/>
    </location>
</feature>
<gene>
    <name evidence="1" type="primary">sstT</name>
    <name type="ordered locus">MGAS2096_Spy0292</name>
</gene>
<proteinExistence type="inferred from homology"/>
<organism>
    <name type="scientific">Streptococcus pyogenes serotype M12 (strain MGAS2096)</name>
    <dbReference type="NCBI Taxonomy" id="370553"/>
    <lineage>
        <taxon>Bacteria</taxon>
        <taxon>Bacillati</taxon>
        <taxon>Bacillota</taxon>
        <taxon>Bacilli</taxon>
        <taxon>Lactobacillales</taxon>
        <taxon>Streptococcaceae</taxon>
        <taxon>Streptococcus</taxon>
    </lineage>
</organism>
<evidence type="ECO:0000255" key="1">
    <source>
        <dbReference type="HAMAP-Rule" id="MF_01582"/>
    </source>
</evidence>
<reference key="1">
    <citation type="journal article" date="2006" name="Proc. Natl. Acad. Sci. U.S.A.">
        <title>Molecular genetic anatomy of inter- and intraserotype variation in the human bacterial pathogen group A Streptococcus.</title>
        <authorList>
            <person name="Beres S.B."/>
            <person name="Richter E.W."/>
            <person name="Nagiec M.J."/>
            <person name="Sumby P."/>
            <person name="Porcella S.F."/>
            <person name="DeLeo F.R."/>
            <person name="Musser J.M."/>
        </authorList>
    </citation>
    <scope>NUCLEOTIDE SEQUENCE [LARGE SCALE GENOMIC DNA]</scope>
    <source>
        <strain>MGAS2096</strain>
    </source>
</reference>
<comment type="function">
    <text evidence="1">Involved in the import of serine and threonine into the cell, with the concomitant import of sodium (symport system).</text>
</comment>
<comment type="catalytic activity">
    <reaction evidence="1">
        <text>L-serine(in) + Na(+)(in) = L-serine(out) + Na(+)(out)</text>
        <dbReference type="Rhea" id="RHEA:29575"/>
        <dbReference type="ChEBI" id="CHEBI:29101"/>
        <dbReference type="ChEBI" id="CHEBI:33384"/>
    </reaction>
    <physiologicalReaction direction="right-to-left" evidence="1">
        <dbReference type="Rhea" id="RHEA:29577"/>
    </physiologicalReaction>
</comment>
<comment type="catalytic activity">
    <reaction evidence="1">
        <text>L-threonine(in) + Na(+)(in) = L-threonine(out) + Na(+)(out)</text>
        <dbReference type="Rhea" id="RHEA:69999"/>
        <dbReference type="ChEBI" id="CHEBI:29101"/>
        <dbReference type="ChEBI" id="CHEBI:57926"/>
    </reaction>
    <physiologicalReaction direction="right-to-left" evidence="1">
        <dbReference type="Rhea" id="RHEA:70001"/>
    </physiologicalReaction>
</comment>
<comment type="subcellular location">
    <subcellularLocation>
        <location evidence="1">Cell membrane</location>
        <topology evidence="1">Multi-pass membrane protein</topology>
    </subcellularLocation>
</comment>
<comment type="similarity">
    <text evidence="1">Belongs to the dicarboxylate/amino acid:cation symporter (DAACS) (TC 2.A.23) family.</text>
</comment>
<name>SSTT_STRPB</name>